<gene>
    <name type="primary">ydjI</name>
    <name type="ordered locus">b1773</name>
    <name type="ordered locus">JW1762</name>
</gene>
<accession>P77704</accession>
<evidence type="ECO:0007829" key="1">
    <source>
        <dbReference type="PDB" id="6OFU"/>
    </source>
</evidence>
<organism>
    <name type="scientific">Escherichia coli (strain K12)</name>
    <dbReference type="NCBI Taxonomy" id="83333"/>
    <lineage>
        <taxon>Bacteria</taxon>
        <taxon>Pseudomonadati</taxon>
        <taxon>Pseudomonadota</taxon>
        <taxon>Gammaproteobacteria</taxon>
        <taxon>Enterobacterales</taxon>
        <taxon>Enterobacteriaceae</taxon>
        <taxon>Escherichia</taxon>
    </lineage>
</organism>
<feature type="chain" id="PRO_0000201326" description="Uncharacterized protein YdjI">
    <location>
        <begin position="1"/>
        <end position="278"/>
    </location>
</feature>
<feature type="helix" evidence="1">
    <location>
        <begin position="5"/>
        <end position="15"/>
    </location>
</feature>
<feature type="strand" evidence="1">
    <location>
        <begin position="19"/>
        <end position="23"/>
    </location>
</feature>
<feature type="helix" evidence="1">
    <location>
        <begin position="27"/>
        <end position="40"/>
    </location>
</feature>
<feature type="strand" evidence="1">
    <location>
        <begin position="44"/>
        <end position="49"/>
    </location>
</feature>
<feature type="helix" evidence="1">
    <location>
        <begin position="50"/>
        <end position="52"/>
    </location>
</feature>
<feature type="turn" evidence="1">
    <location>
        <begin position="53"/>
        <end position="55"/>
    </location>
</feature>
<feature type="helix" evidence="1">
    <location>
        <begin position="58"/>
        <end position="71"/>
    </location>
</feature>
<feature type="strand" evidence="1">
    <location>
        <begin position="76"/>
        <end position="83"/>
    </location>
</feature>
<feature type="helix" evidence="1">
    <location>
        <begin position="86"/>
        <end position="94"/>
    </location>
</feature>
<feature type="strand" evidence="1">
    <location>
        <begin position="99"/>
        <end position="102"/>
    </location>
</feature>
<feature type="helix" evidence="1">
    <location>
        <begin position="109"/>
        <end position="123"/>
    </location>
</feature>
<feature type="helix" evidence="1">
    <location>
        <begin position="124"/>
        <end position="126"/>
    </location>
</feature>
<feature type="strand" evidence="1">
    <location>
        <begin position="130"/>
        <end position="133"/>
    </location>
</feature>
<feature type="helix" evidence="1">
    <location>
        <begin position="142"/>
        <end position="146"/>
    </location>
</feature>
<feature type="helix" evidence="1">
    <location>
        <begin position="155"/>
        <end position="165"/>
    </location>
</feature>
<feature type="strand" evidence="1">
    <location>
        <begin position="168"/>
        <end position="172"/>
    </location>
</feature>
<feature type="helix" evidence="1">
    <location>
        <begin position="189"/>
        <end position="198"/>
    </location>
</feature>
<feature type="strand" evidence="1">
    <location>
        <begin position="203"/>
        <end position="205"/>
    </location>
</feature>
<feature type="helix" evidence="1">
    <location>
        <begin position="213"/>
        <end position="221"/>
    </location>
</feature>
<feature type="strand" evidence="1">
    <location>
        <begin position="224"/>
        <end position="229"/>
    </location>
</feature>
<feature type="helix" evidence="1">
    <location>
        <begin position="231"/>
        <end position="243"/>
    </location>
</feature>
<feature type="turn" evidence="1">
    <location>
        <begin position="244"/>
        <end position="246"/>
    </location>
</feature>
<feature type="helix" evidence="1">
    <location>
        <begin position="249"/>
        <end position="270"/>
    </location>
</feature>
<feature type="turn" evidence="1">
    <location>
        <begin position="274"/>
        <end position="277"/>
    </location>
</feature>
<protein>
    <recommendedName>
        <fullName>Uncharacterized protein YdjI</fullName>
    </recommendedName>
</protein>
<proteinExistence type="evidence at protein level"/>
<reference key="1">
    <citation type="journal article" date="1996" name="DNA Res.">
        <title>A 570-kb DNA sequence of the Escherichia coli K-12 genome corresponding to the 28.0-40.1 min region on the linkage map.</title>
        <authorList>
            <person name="Aiba H."/>
            <person name="Baba T."/>
            <person name="Fujita K."/>
            <person name="Hayashi K."/>
            <person name="Inada T."/>
            <person name="Isono K."/>
            <person name="Itoh T."/>
            <person name="Kasai H."/>
            <person name="Kashimoto K."/>
            <person name="Kimura S."/>
            <person name="Kitakawa M."/>
            <person name="Kitagawa M."/>
            <person name="Makino K."/>
            <person name="Miki T."/>
            <person name="Mizobuchi K."/>
            <person name="Mori H."/>
            <person name="Mori T."/>
            <person name="Motomura K."/>
            <person name="Nakade S."/>
            <person name="Nakamura Y."/>
            <person name="Nashimoto H."/>
            <person name="Nishio Y."/>
            <person name="Oshima T."/>
            <person name="Saito N."/>
            <person name="Sampei G."/>
            <person name="Seki Y."/>
            <person name="Sivasundaram S."/>
            <person name="Tagami H."/>
            <person name="Takeda J."/>
            <person name="Takemoto K."/>
            <person name="Takeuchi Y."/>
            <person name="Wada C."/>
            <person name="Yamamoto Y."/>
            <person name="Horiuchi T."/>
        </authorList>
    </citation>
    <scope>NUCLEOTIDE SEQUENCE [LARGE SCALE GENOMIC DNA]</scope>
    <source>
        <strain>K12 / W3110 / ATCC 27325 / DSM 5911</strain>
    </source>
</reference>
<reference key="2">
    <citation type="journal article" date="1997" name="Science">
        <title>The complete genome sequence of Escherichia coli K-12.</title>
        <authorList>
            <person name="Blattner F.R."/>
            <person name="Plunkett G. III"/>
            <person name="Bloch C.A."/>
            <person name="Perna N.T."/>
            <person name="Burland V."/>
            <person name="Riley M."/>
            <person name="Collado-Vides J."/>
            <person name="Glasner J.D."/>
            <person name="Rode C.K."/>
            <person name="Mayhew G.F."/>
            <person name="Gregor J."/>
            <person name="Davis N.W."/>
            <person name="Kirkpatrick H.A."/>
            <person name="Goeden M.A."/>
            <person name="Rose D.J."/>
            <person name="Mau B."/>
            <person name="Shao Y."/>
        </authorList>
    </citation>
    <scope>NUCLEOTIDE SEQUENCE [LARGE SCALE GENOMIC DNA]</scope>
    <source>
        <strain>K12 / MG1655 / ATCC 47076</strain>
    </source>
</reference>
<reference key="3">
    <citation type="journal article" date="2006" name="Mol. Syst. Biol.">
        <title>Highly accurate genome sequences of Escherichia coli K-12 strains MG1655 and W3110.</title>
        <authorList>
            <person name="Hayashi K."/>
            <person name="Morooka N."/>
            <person name="Yamamoto Y."/>
            <person name="Fujita K."/>
            <person name="Isono K."/>
            <person name="Choi S."/>
            <person name="Ohtsubo E."/>
            <person name="Baba T."/>
            <person name="Wanner B.L."/>
            <person name="Mori H."/>
            <person name="Horiuchi T."/>
        </authorList>
    </citation>
    <scope>NUCLEOTIDE SEQUENCE [LARGE SCALE GENOMIC DNA]</scope>
    <source>
        <strain>K12 / W3110 / ATCC 27325 / DSM 5911</strain>
    </source>
</reference>
<name>YDJI_ECOLI</name>
<keyword id="KW-0002">3D-structure</keyword>
<keyword id="KW-1185">Reference proteome</keyword>
<dbReference type="EMBL" id="U00096">
    <property type="protein sequence ID" value="AAC74843.1"/>
    <property type="molecule type" value="Genomic_DNA"/>
</dbReference>
<dbReference type="EMBL" id="AP009048">
    <property type="protein sequence ID" value="BAA15564.1"/>
    <property type="molecule type" value="Genomic_DNA"/>
</dbReference>
<dbReference type="PIR" id="E64937">
    <property type="entry name" value="E64937"/>
</dbReference>
<dbReference type="RefSeq" id="NP_416287.1">
    <property type="nucleotide sequence ID" value="NC_000913.3"/>
</dbReference>
<dbReference type="RefSeq" id="WP_000878893.1">
    <property type="nucleotide sequence ID" value="NZ_SSZK01000001.1"/>
</dbReference>
<dbReference type="PDB" id="6OFU">
    <property type="method" value="X-ray"/>
    <property type="resolution" value="1.75 A"/>
    <property type="chains" value="A/B/C/D=1-278"/>
</dbReference>
<dbReference type="PDBsum" id="6OFU"/>
<dbReference type="SMR" id="P77704"/>
<dbReference type="BioGRID" id="4259348">
    <property type="interactions" value="48"/>
</dbReference>
<dbReference type="DIP" id="DIP-28071N"/>
<dbReference type="FunCoup" id="P77704">
    <property type="interactions" value="40"/>
</dbReference>
<dbReference type="IntAct" id="P77704">
    <property type="interactions" value="8"/>
</dbReference>
<dbReference type="STRING" id="511145.b1773"/>
<dbReference type="PaxDb" id="511145-b1773"/>
<dbReference type="EnsemblBacteria" id="AAC74843">
    <property type="protein sequence ID" value="AAC74843"/>
    <property type="gene ID" value="b1773"/>
</dbReference>
<dbReference type="GeneID" id="946291"/>
<dbReference type="KEGG" id="ecj:JW1762"/>
<dbReference type="KEGG" id="eco:b1773"/>
<dbReference type="PATRIC" id="fig|1411691.4.peg.481"/>
<dbReference type="EchoBASE" id="EB3258"/>
<dbReference type="eggNOG" id="COG0191">
    <property type="taxonomic scope" value="Bacteria"/>
</dbReference>
<dbReference type="HOGENOM" id="CLU_040088_0_1_6"/>
<dbReference type="InParanoid" id="P77704"/>
<dbReference type="OMA" id="RVDCYLV"/>
<dbReference type="OrthoDB" id="9803995at2"/>
<dbReference type="PhylomeDB" id="P77704"/>
<dbReference type="BioCyc" id="EcoCyc:G6960-MONOMER"/>
<dbReference type="BioCyc" id="MetaCyc:G6960-MONOMER"/>
<dbReference type="PRO" id="PR:P77704"/>
<dbReference type="Proteomes" id="UP000000625">
    <property type="component" value="Chromosome"/>
</dbReference>
<dbReference type="GO" id="GO:0005829">
    <property type="term" value="C:cytosol"/>
    <property type="evidence" value="ECO:0000318"/>
    <property type="project" value="GO_Central"/>
</dbReference>
<dbReference type="GO" id="GO:0016832">
    <property type="term" value="F:aldehyde-lyase activity"/>
    <property type="evidence" value="ECO:0000314"/>
    <property type="project" value="EcoCyc"/>
</dbReference>
<dbReference type="GO" id="GO:0042802">
    <property type="term" value="F:identical protein binding"/>
    <property type="evidence" value="ECO:0000314"/>
    <property type="project" value="EcoCyc"/>
</dbReference>
<dbReference type="GO" id="GO:0009025">
    <property type="term" value="F:tagatose-bisphosphate aldolase activity"/>
    <property type="evidence" value="ECO:0000318"/>
    <property type="project" value="GO_Central"/>
</dbReference>
<dbReference type="GO" id="GO:0008270">
    <property type="term" value="F:zinc ion binding"/>
    <property type="evidence" value="ECO:0000314"/>
    <property type="project" value="EcoCyc"/>
</dbReference>
<dbReference type="GO" id="GO:0005975">
    <property type="term" value="P:carbohydrate metabolic process"/>
    <property type="evidence" value="ECO:0007669"/>
    <property type="project" value="InterPro"/>
</dbReference>
<dbReference type="GO" id="GO:0051289">
    <property type="term" value="P:protein homotetramerization"/>
    <property type="evidence" value="ECO:0000314"/>
    <property type="project" value="EcoCyc"/>
</dbReference>
<dbReference type="CDD" id="cd00947">
    <property type="entry name" value="TBP_aldolase_IIB"/>
    <property type="match status" value="1"/>
</dbReference>
<dbReference type="Gene3D" id="3.20.20.70">
    <property type="entry name" value="Aldolase class I"/>
    <property type="match status" value="1"/>
</dbReference>
<dbReference type="InterPro" id="IPR013785">
    <property type="entry name" value="Aldolase_TIM"/>
</dbReference>
<dbReference type="InterPro" id="IPR050246">
    <property type="entry name" value="Class_II_FBP_aldolase"/>
</dbReference>
<dbReference type="InterPro" id="IPR000771">
    <property type="entry name" value="FBA_II"/>
</dbReference>
<dbReference type="NCBIfam" id="TIGR00167">
    <property type="entry name" value="cbbA"/>
    <property type="match status" value="1"/>
</dbReference>
<dbReference type="PANTHER" id="PTHR30304">
    <property type="entry name" value="D-TAGATOSE-1,6-BISPHOSPHATE ALDOLASE"/>
    <property type="match status" value="1"/>
</dbReference>
<dbReference type="PANTHER" id="PTHR30304:SF0">
    <property type="entry name" value="D-TAGATOSE-1,6-BISPHOSPHATE ALDOLASE SUBUNIT GATY-RELATED"/>
    <property type="match status" value="1"/>
</dbReference>
<dbReference type="Pfam" id="PF01116">
    <property type="entry name" value="F_bP_aldolase"/>
    <property type="match status" value="1"/>
</dbReference>
<dbReference type="PIRSF" id="PIRSF001359">
    <property type="entry name" value="F_bP_aldolase_II"/>
    <property type="match status" value="1"/>
</dbReference>
<dbReference type="SUPFAM" id="SSF51569">
    <property type="entry name" value="Aldolase"/>
    <property type="match status" value="1"/>
</dbReference>
<sequence length="278" mass="30810">MLADIRYWENDATNKHYAIAHFNVWNAEMLMGVIDAAEEAKSPVIISFGTGFVGNTSFEDFSHMMVSMAQKATVPVITHWDHGRSMEIIHNAWTHGMNSLMRDASAFDFEENIRLTKEAVDFFHPLGIPVEAELGHVGNETVYEEALAGYHYTDPDQAAEFVERTGCDSLAVAIGNQHGVYTSEPQLNFEVVKRVRDAVSVPLVLHGASGISDADIKTAISLGIAKINIHTELCQAAMVAVKENQDQPFLHLEREVRKAVKERALEKIKLFGSDGKAE</sequence>